<gene>
    <name evidence="1" type="primary">dapA</name>
    <name type="ordered locus">Cthe_0962</name>
</gene>
<accession>A3DE17</accession>
<name>DAPA_ACET2</name>
<feature type="chain" id="PRO_0000340942" description="4-hydroxy-tetrahydrodipicolinate synthase">
    <location>
        <begin position="1"/>
        <end position="292"/>
    </location>
</feature>
<feature type="active site" description="Proton donor/acceptor" evidence="1">
    <location>
        <position position="136"/>
    </location>
</feature>
<feature type="active site" description="Schiff-base intermediate with substrate" evidence="1">
    <location>
        <position position="164"/>
    </location>
</feature>
<feature type="binding site" evidence="1">
    <location>
        <position position="48"/>
    </location>
    <ligand>
        <name>pyruvate</name>
        <dbReference type="ChEBI" id="CHEBI:15361"/>
    </ligand>
</feature>
<feature type="binding site" evidence="1">
    <location>
        <position position="204"/>
    </location>
    <ligand>
        <name>pyruvate</name>
        <dbReference type="ChEBI" id="CHEBI:15361"/>
    </ligand>
</feature>
<feature type="site" description="Part of a proton relay during catalysis" evidence="1">
    <location>
        <position position="47"/>
    </location>
</feature>
<feature type="site" description="Part of a proton relay during catalysis" evidence="1">
    <location>
        <position position="110"/>
    </location>
</feature>
<comment type="function">
    <text evidence="1">Catalyzes the condensation of (S)-aspartate-beta-semialdehyde [(S)-ASA] and pyruvate to 4-hydroxy-tetrahydrodipicolinate (HTPA).</text>
</comment>
<comment type="catalytic activity">
    <reaction evidence="1">
        <text>L-aspartate 4-semialdehyde + pyruvate = (2S,4S)-4-hydroxy-2,3,4,5-tetrahydrodipicolinate + H2O + H(+)</text>
        <dbReference type="Rhea" id="RHEA:34171"/>
        <dbReference type="ChEBI" id="CHEBI:15361"/>
        <dbReference type="ChEBI" id="CHEBI:15377"/>
        <dbReference type="ChEBI" id="CHEBI:15378"/>
        <dbReference type="ChEBI" id="CHEBI:67139"/>
        <dbReference type="ChEBI" id="CHEBI:537519"/>
        <dbReference type="EC" id="4.3.3.7"/>
    </reaction>
</comment>
<comment type="pathway">
    <text evidence="1">Amino-acid biosynthesis; L-lysine biosynthesis via DAP pathway; (S)-tetrahydrodipicolinate from L-aspartate: step 3/4.</text>
</comment>
<comment type="subunit">
    <text evidence="1">Homotetramer; dimer of dimers.</text>
</comment>
<comment type="subcellular location">
    <subcellularLocation>
        <location evidence="1">Cytoplasm</location>
    </subcellularLocation>
</comment>
<comment type="similarity">
    <text evidence="1">Belongs to the DapA family.</text>
</comment>
<comment type="caution">
    <text evidence="2">Was originally thought to be a dihydrodipicolinate synthase (DHDPS), catalyzing the condensation of (S)-aspartate-beta-semialdehyde [(S)-ASA] and pyruvate to dihydrodipicolinate (DHDP). However, it was shown in E.coli that the product of the enzymatic reaction is not dihydrodipicolinate but in fact (4S)-4-hydroxy-2,3,4,5-tetrahydro-(2S)-dipicolinic acid (HTPA), and that the consecutive dehydration reaction leading to DHDP is not spontaneous but catalyzed by DapB.</text>
</comment>
<sequence>MRKPIFTGAGVAIITPFTENGVNYDKLGELIEFQIREGIDSIIICGTTGEASTMPDEEHKAVIKYTVEKVNKRVPVIAGTGSNDTIHAVELSKYAEEVGADAILSVTPYYNKTTQKGLYEHFKLIAESIKIPVVLYNVPGRTGLNIEPKTVKQLAEIENIVAIKECNINQVGEIISICPPDFTVYSGNDDMVVPLLALGGKGVISVMANIIPKKTHELVATFLDGNVEESRKIQLSLLNLIKALFIEVSPIPVKAAMNLMGMEVGKCRLPLTDMTEKNFEILKQTLKDYGLI</sequence>
<proteinExistence type="inferred from homology"/>
<keyword id="KW-0028">Amino-acid biosynthesis</keyword>
<keyword id="KW-0963">Cytoplasm</keyword>
<keyword id="KW-0220">Diaminopimelate biosynthesis</keyword>
<keyword id="KW-0456">Lyase</keyword>
<keyword id="KW-0457">Lysine biosynthesis</keyword>
<keyword id="KW-1185">Reference proteome</keyword>
<keyword id="KW-0704">Schiff base</keyword>
<evidence type="ECO:0000255" key="1">
    <source>
        <dbReference type="HAMAP-Rule" id="MF_00418"/>
    </source>
</evidence>
<evidence type="ECO:0000305" key="2"/>
<reference key="1">
    <citation type="submission" date="2007-02" db="EMBL/GenBank/DDBJ databases">
        <title>Complete sequence of Clostridium thermocellum ATCC 27405.</title>
        <authorList>
            <consortium name="US DOE Joint Genome Institute"/>
            <person name="Copeland A."/>
            <person name="Lucas S."/>
            <person name="Lapidus A."/>
            <person name="Barry K."/>
            <person name="Detter J.C."/>
            <person name="Glavina del Rio T."/>
            <person name="Hammon N."/>
            <person name="Israni S."/>
            <person name="Dalin E."/>
            <person name="Tice H."/>
            <person name="Pitluck S."/>
            <person name="Chertkov O."/>
            <person name="Brettin T."/>
            <person name="Bruce D."/>
            <person name="Han C."/>
            <person name="Tapia R."/>
            <person name="Gilna P."/>
            <person name="Schmutz J."/>
            <person name="Larimer F."/>
            <person name="Land M."/>
            <person name="Hauser L."/>
            <person name="Kyrpides N."/>
            <person name="Mikhailova N."/>
            <person name="Wu J.H.D."/>
            <person name="Newcomb M."/>
            <person name="Richardson P."/>
        </authorList>
    </citation>
    <scope>NUCLEOTIDE SEQUENCE [LARGE SCALE GENOMIC DNA]</scope>
    <source>
        <strain>ATCC 27405 / DSM 1237 / JCM 9322 / NBRC 103400 / NCIMB 10682 / NRRL B-4536 / VPI 7372</strain>
    </source>
</reference>
<protein>
    <recommendedName>
        <fullName evidence="1">4-hydroxy-tetrahydrodipicolinate synthase</fullName>
        <shortName evidence="1">HTPA synthase</shortName>
        <ecNumber evidence="1">4.3.3.7</ecNumber>
    </recommendedName>
</protein>
<dbReference type="EC" id="4.3.3.7" evidence="1"/>
<dbReference type="EMBL" id="CP000568">
    <property type="protein sequence ID" value="ABN52196.1"/>
    <property type="molecule type" value="Genomic_DNA"/>
</dbReference>
<dbReference type="RefSeq" id="WP_003518658.1">
    <property type="nucleotide sequence ID" value="NC_009012.1"/>
</dbReference>
<dbReference type="SMR" id="A3DE17"/>
<dbReference type="STRING" id="203119.Cthe_0962"/>
<dbReference type="GeneID" id="35805871"/>
<dbReference type="KEGG" id="cth:Cthe_0962"/>
<dbReference type="eggNOG" id="COG0329">
    <property type="taxonomic scope" value="Bacteria"/>
</dbReference>
<dbReference type="HOGENOM" id="CLU_049343_7_1_9"/>
<dbReference type="OrthoDB" id="9782828at2"/>
<dbReference type="UniPathway" id="UPA00034">
    <property type="reaction ID" value="UER00017"/>
</dbReference>
<dbReference type="Proteomes" id="UP000002145">
    <property type="component" value="Chromosome"/>
</dbReference>
<dbReference type="GO" id="GO:0005829">
    <property type="term" value="C:cytosol"/>
    <property type="evidence" value="ECO:0007669"/>
    <property type="project" value="TreeGrafter"/>
</dbReference>
<dbReference type="GO" id="GO:0008840">
    <property type="term" value="F:4-hydroxy-tetrahydrodipicolinate synthase activity"/>
    <property type="evidence" value="ECO:0007669"/>
    <property type="project" value="UniProtKB-UniRule"/>
</dbReference>
<dbReference type="GO" id="GO:0019877">
    <property type="term" value="P:diaminopimelate biosynthetic process"/>
    <property type="evidence" value="ECO:0007669"/>
    <property type="project" value="UniProtKB-UniRule"/>
</dbReference>
<dbReference type="GO" id="GO:0009089">
    <property type="term" value="P:lysine biosynthetic process via diaminopimelate"/>
    <property type="evidence" value="ECO:0007669"/>
    <property type="project" value="UniProtKB-UniRule"/>
</dbReference>
<dbReference type="CDD" id="cd00950">
    <property type="entry name" value="DHDPS"/>
    <property type="match status" value="1"/>
</dbReference>
<dbReference type="Gene3D" id="3.20.20.70">
    <property type="entry name" value="Aldolase class I"/>
    <property type="match status" value="1"/>
</dbReference>
<dbReference type="HAMAP" id="MF_00418">
    <property type="entry name" value="DapA"/>
    <property type="match status" value="1"/>
</dbReference>
<dbReference type="InterPro" id="IPR013785">
    <property type="entry name" value="Aldolase_TIM"/>
</dbReference>
<dbReference type="InterPro" id="IPR005263">
    <property type="entry name" value="DapA"/>
</dbReference>
<dbReference type="InterPro" id="IPR002220">
    <property type="entry name" value="DapA-like"/>
</dbReference>
<dbReference type="InterPro" id="IPR020625">
    <property type="entry name" value="Schiff_base-form_aldolases_AS"/>
</dbReference>
<dbReference type="InterPro" id="IPR020624">
    <property type="entry name" value="Schiff_base-form_aldolases_CS"/>
</dbReference>
<dbReference type="NCBIfam" id="TIGR00674">
    <property type="entry name" value="dapA"/>
    <property type="match status" value="1"/>
</dbReference>
<dbReference type="PANTHER" id="PTHR12128:SF66">
    <property type="entry name" value="4-HYDROXY-2-OXOGLUTARATE ALDOLASE, MITOCHONDRIAL"/>
    <property type="match status" value="1"/>
</dbReference>
<dbReference type="PANTHER" id="PTHR12128">
    <property type="entry name" value="DIHYDRODIPICOLINATE SYNTHASE"/>
    <property type="match status" value="1"/>
</dbReference>
<dbReference type="Pfam" id="PF00701">
    <property type="entry name" value="DHDPS"/>
    <property type="match status" value="1"/>
</dbReference>
<dbReference type="PIRSF" id="PIRSF001365">
    <property type="entry name" value="DHDPS"/>
    <property type="match status" value="1"/>
</dbReference>
<dbReference type="PRINTS" id="PR00146">
    <property type="entry name" value="DHPICSNTHASE"/>
</dbReference>
<dbReference type="SMART" id="SM01130">
    <property type="entry name" value="DHDPS"/>
    <property type="match status" value="1"/>
</dbReference>
<dbReference type="SUPFAM" id="SSF51569">
    <property type="entry name" value="Aldolase"/>
    <property type="match status" value="1"/>
</dbReference>
<dbReference type="PROSITE" id="PS00665">
    <property type="entry name" value="DHDPS_1"/>
    <property type="match status" value="1"/>
</dbReference>
<dbReference type="PROSITE" id="PS00666">
    <property type="entry name" value="DHDPS_2"/>
    <property type="match status" value="1"/>
</dbReference>
<organism>
    <name type="scientific">Acetivibrio thermocellus (strain ATCC 27405 / DSM 1237 / JCM 9322 / NBRC 103400 / NCIMB 10682 / NRRL B-4536 / VPI 7372)</name>
    <name type="common">Clostridium thermocellum</name>
    <dbReference type="NCBI Taxonomy" id="203119"/>
    <lineage>
        <taxon>Bacteria</taxon>
        <taxon>Bacillati</taxon>
        <taxon>Bacillota</taxon>
        <taxon>Clostridia</taxon>
        <taxon>Eubacteriales</taxon>
        <taxon>Oscillospiraceae</taxon>
        <taxon>Acetivibrio</taxon>
    </lineage>
</organism>